<proteinExistence type="evidence at transcript level"/>
<dbReference type="EMBL" id="CR858963">
    <property type="protein sequence ID" value="CAH91159.1"/>
    <property type="molecule type" value="mRNA"/>
</dbReference>
<dbReference type="SMR" id="Q5RAQ1"/>
<dbReference type="FunCoup" id="Q5RAQ1">
    <property type="interactions" value="431"/>
</dbReference>
<dbReference type="STRING" id="9601.ENSPPYP00000015578"/>
<dbReference type="GlyCosmos" id="Q5RAQ1">
    <property type="glycosylation" value="4 sites, No reported glycans"/>
</dbReference>
<dbReference type="eggNOG" id="KOG4564">
    <property type="taxonomic scope" value="Eukaryota"/>
</dbReference>
<dbReference type="InParanoid" id="Q5RAQ1"/>
<dbReference type="Proteomes" id="UP000001595">
    <property type="component" value="Unplaced"/>
</dbReference>
<dbReference type="GO" id="GO:0005886">
    <property type="term" value="C:plasma membrane"/>
    <property type="evidence" value="ECO:0000250"/>
    <property type="project" value="UniProtKB"/>
</dbReference>
<dbReference type="GO" id="GO:0008528">
    <property type="term" value="F:G protein-coupled peptide receptor activity"/>
    <property type="evidence" value="ECO:0007669"/>
    <property type="project" value="TreeGrafter"/>
</dbReference>
<dbReference type="GO" id="GO:0004991">
    <property type="term" value="F:parathyroid hormone receptor activity"/>
    <property type="evidence" value="ECO:0000250"/>
    <property type="project" value="UniProtKB"/>
</dbReference>
<dbReference type="GO" id="GO:0017046">
    <property type="term" value="F:peptide hormone binding"/>
    <property type="evidence" value="ECO:0000250"/>
    <property type="project" value="UniProtKB"/>
</dbReference>
<dbReference type="GO" id="GO:0042803">
    <property type="term" value="F:protein homodimerization activity"/>
    <property type="evidence" value="ECO:0000250"/>
    <property type="project" value="UniProtKB"/>
</dbReference>
<dbReference type="GO" id="GO:0007189">
    <property type="term" value="P:adenylate cyclase-activating G protein-coupled receptor signaling pathway"/>
    <property type="evidence" value="ECO:0000250"/>
    <property type="project" value="UniProtKB"/>
</dbReference>
<dbReference type="GO" id="GO:0007188">
    <property type="term" value="P:adenylate cyclase-modulating G protein-coupled receptor signaling pathway"/>
    <property type="evidence" value="ECO:0000250"/>
    <property type="project" value="UniProtKB"/>
</dbReference>
<dbReference type="GO" id="GO:0007166">
    <property type="term" value="P:cell surface receptor signaling pathway"/>
    <property type="evidence" value="ECO:0007669"/>
    <property type="project" value="InterPro"/>
</dbReference>
<dbReference type="GO" id="GO:0006874">
    <property type="term" value="P:intracellular calcium ion homeostasis"/>
    <property type="evidence" value="ECO:0007669"/>
    <property type="project" value="TreeGrafter"/>
</dbReference>
<dbReference type="FunFam" id="1.20.1070.10:FF:000070">
    <property type="entry name" value="Parathyroid hormone/parathyroid hormone-related peptide receptor"/>
    <property type="match status" value="1"/>
</dbReference>
<dbReference type="Gene3D" id="4.10.1240.10">
    <property type="entry name" value="GPCR, family 2, extracellular hormone receptor domain"/>
    <property type="match status" value="1"/>
</dbReference>
<dbReference type="Gene3D" id="1.20.1070.10">
    <property type="entry name" value="Rhodopsin 7-helix transmembrane proteins"/>
    <property type="match status" value="1"/>
</dbReference>
<dbReference type="InterPro" id="IPR050332">
    <property type="entry name" value="GPCR_2"/>
</dbReference>
<dbReference type="InterPro" id="IPR017981">
    <property type="entry name" value="GPCR_2-like_7TM"/>
</dbReference>
<dbReference type="InterPro" id="IPR036445">
    <property type="entry name" value="GPCR_2_extracell_dom_sf"/>
</dbReference>
<dbReference type="InterPro" id="IPR001879">
    <property type="entry name" value="GPCR_2_extracellular_dom"/>
</dbReference>
<dbReference type="InterPro" id="IPR002170">
    <property type="entry name" value="GPCR_2_parathyroid_rcpt"/>
</dbReference>
<dbReference type="InterPro" id="IPR000832">
    <property type="entry name" value="GPCR_2_secretin-like"/>
</dbReference>
<dbReference type="InterPro" id="IPR017983">
    <property type="entry name" value="GPCR_2_secretin-like_CS"/>
</dbReference>
<dbReference type="PANTHER" id="PTHR45620:SF27">
    <property type="entry name" value="PARATHYROID HORMONE_PARATHYROID HORMONE-RELATED PEPTIDE RECEPTOR"/>
    <property type="match status" value="1"/>
</dbReference>
<dbReference type="PANTHER" id="PTHR45620">
    <property type="entry name" value="PDF RECEPTOR-LIKE PROTEIN-RELATED"/>
    <property type="match status" value="1"/>
</dbReference>
<dbReference type="Pfam" id="PF00002">
    <property type="entry name" value="7tm_2"/>
    <property type="match status" value="1"/>
</dbReference>
<dbReference type="Pfam" id="PF02793">
    <property type="entry name" value="HRM"/>
    <property type="match status" value="1"/>
</dbReference>
<dbReference type="PRINTS" id="PR00249">
    <property type="entry name" value="GPCRSECRETIN"/>
</dbReference>
<dbReference type="PRINTS" id="PR00393">
    <property type="entry name" value="PTRHORMONER"/>
</dbReference>
<dbReference type="SMART" id="SM00008">
    <property type="entry name" value="HormR"/>
    <property type="match status" value="1"/>
</dbReference>
<dbReference type="SUPFAM" id="SSF81321">
    <property type="entry name" value="Family A G protein-coupled receptor-like"/>
    <property type="match status" value="1"/>
</dbReference>
<dbReference type="SUPFAM" id="SSF111418">
    <property type="entry name" value="Hormone receptor domain"/>
    <property type="match status" value="1"/>
</dbReference>
<dbReference type="PROSITE" id="PS00650">
    <property type="entry name" value="G_PROTEIN_RECEP_F2_2"/>
    <property type="match status" value="1"/>
</dbReference>
<dbReference type="PROSITE" id="PS50227">
    <property type="entry name" value="G_PROTEIN_RECEP_F2_3"/>
    <property type="match status" value="1"/>
</dbReference>
<dbReference type="PROSITE" id="PS50261">
    <property type="entry name" value="G_PROTEIN_RECEP_F2_4"/>
    <property type="match status" value="1"/>
</dbReference>
<gene>
    <name type="primary">PTH1R</name>
    <name type="synonym">PTHR1</name>
</gene>
<accession>Q5RAQ1</accession>
<protein>
    <recommendedName>
        <fullName>Parathyroid hormone/parathyroid hormone-related peptide receptor</fullName>
    </recommendedName>
    <alternativeName>
        <fullName>PTH/PTHrP type I receptor</fullName>
        <shortName>PTH/PTHr receptor</shortName>
    </alternativeName>
    <alternativeName>
        <fullName>Parathyroid hormone 1 receptor</fullName>
        <shortName>PTH1 receptor</shortName>
    </alternativeName>
</protein>
<comment type="function">
    <text evidence="2">G-protein-coupled receptor for parathyroid hormone (PTH) and for parathyroid hormone-related peptide (PTHLH). Ligand binding causes a conformation change that triggers signaling via guanine nucleotide-binding proteins (G proteins) and modulates the activity of downstream effectors, such as adenylate cyclase (cAMP). PTH1R is coupled to G(s) G alpha proteins and mediates activation of adenylate cyclase activity. PTHLH dissociates from PTH1R more rapidly than PTH; as consequence, the cAMP response induced by PTHLH decays faster than the response induced by PTH.</text>
</comment>
<comment type="subunit">
    <text evidence="2">Homodimer in the absence of bound ligand. Peptide hormone binding leads to dissociation of the homodimer.</text>
</comment>
<comment type="subcellular location">
    <subcellularLocation>
        <location evidence="2">Cell membrane</location>
        <topology evidence="2">Multi-pass membrane protein</topology>
    </subcellularLocation>
</comment>
<comment type="PTM">
    <text evidence="2">N-glycosylated.</text>
</comment>
<comment type="similarity">
    <text evidence="5">Belongs to the G-protein coupled receptor 2 family.</text>
</comment>
<sequence length="594" mass="66500">MGTARIAPGLALLLCCPVLSSAYALVDADDVMTKEEQIFLLHRAQAQCGKRLKEVLQRPADIMESDKGWTSASTSGKPRKDKASGKLYPESEEDKEAPTDSRYRGRPCLPEWDHILCWPLGAPQGEVVAVPCPDYIYDFNHKGHAYRRCDRNGSWELVPGHNRTWANYSECVQFLTNETREREVFDRLGMIYTVGYSMSLASLTVAVLILAYFRRLHCTRNYIHMHLFLSFMLRAVSIFVKDAVLYSGATLDEAERLTEEELRAIAQAPPPPATAAAGYAGCRVAVTFFLYFLATNYYWILVEGLYLHSLIFMAFFSEKKYLWGFTVFGWGLPAVFVAVWVSVRATLANTGCWDLSSGNKKWIIQVPILASIVLHFILFINIVRVLATKLRETNAGRCDTRQQYRKLLKSTLVLMPLFGVHYIVFMATPYTEVSGTLWQVQMHYEMLFNSFQGFFVAIIYCFCNGEVQAEIKKSWSRWTLALDFKRKARSGSSSYSYGPMVSHTSVTNVGPRVGLGLPLSPRLLPTATTNGHPQLPGHAKPGTPALETLETTPPATAAPKDDGFLNGSCSGLDEEASGPEQPPALLQEEWETVM</sequence>
<evidence type="ECO:0000250" key="1"/>
<evidence type="ECO:0000250" key="2">
    <source>
        <dbReference type="UniProtKB" id="Q03431"/>
    </source>
</evidence>
<evidence type="ECO:0000255" key="3"/>
<evidence type="ECO:0000256" key="4">
    <source>
        <dbReference type="SAM" id="MobiDB-lite"/>
    </source>
</evidence>
<evidence type="ECO:0000305" key="5"/>
<name>PTH1R_PONAB</name>
<reference key="1">
    <citation type="submission" date="2004-11" db="EMBL/GenBank/DDBJ databases">
        <authorList>
            <consortium name="The German cDNA consortium"/>
        </authorList>
    </citation>
    <scope>NUCLEOTIDE SEQUENCE [LARGE SCALE MRNA]</scope>
    <source>
        <tissue>Kidney</tissue>
    </source>
</reference>
<keyword id="KW-1003">Cell membrane</keyword>
<keyword id="KW-1015">Disulfide bond</keyword>
<keyword id="KW-0297">G-protein coupled receptor</keyword>
<keyword id="KW-0325">Glycoprotein</keyword>
<keyword id="KW-0472">Membrane</keyword>
<keyword id="KW-0597">Phosphoprotein</keyword>
<keyword id="KW-0675">Receptor</keyword>
<keyword id="KW-1185">Reference proteome</keyword>
<keyword id="KW-0732">Signal</keyword>
<keyword id="KW-0807">Transducer</keyword>
<keyword id="KW-0812">Transmembrane</keyword>
<keyword id="KW-1133">Transmembrane helix</keyword>
<organism>
    <name type="scientific">Pongo abelii</name>
    <name type="common">Sumatran orangutan</name>
    <name type="synonym">Pongo pygmaeus abelii</name>
    <dbReference type="NCBI Taxonomy" id="9601"/>
    <lineage>
        <taxon>Eukaryota</taxon>
        <taxon>Metazoa</taxon>
        <taxon>Chordata</taxon>
        <taxon>Craniata</taxon>
        <taxon>Vertebrata</taxon>
        <taxon>Euteleostomi</taxon>
        <taxon>Mammalia</taxon>
        <taxon>Eutheria</taxon>
        <taxon>Euarchontoglires</taxon>
        <taxon>Primates</taxon>
        <taxon>Haplorrhini</taxon>
        <taxon>Catarrhini</taxon>
        <taxon>Hominidae</taxon>
        <taxon>Pongo</taxon>
    </lineage>
</organism>
<feature type="signal peptide" evidence="3">
    <location>
        <begin position="1"/>
        <end position="28"/>
    </location>
</feature>
<feature type="chain" id="PRO_0000250992" description="Parathyroid hormone/parathyroid hormone-related peptide receptor">
    <location>
        <begin position="29"/>
        <end position="594"/>
    </location>
</feature>
<feature type="topological domain" description="Extracellular" evidence="3">
    <location>
        <begin position="29"/>
        <end position="188"/>
    </location>
</feature>
<feature type="transmembrane region" description="Helical; Name=1" evidence="3">
    <location>
        <begin position="189"/>
        <end position="209"/>
    </location>
</feature>
<feature type="topological domain" description="Cytoplasmic" evidence="3">
    <location>
        <begin position="210"/>
        <end position="223"/>
    </location>
</feature>
<feature type="transmembrane region" description="Helical; Name=2" evidence="3">
    <location>
        <begin position="224"/>
        <end position="244"/>
    </location>
</feature>
<feature type="topological domain" description="Extracellular" evidence="3">
    <location>
        <begin position="245"/>
        <end position="295"/>
    </location>
</feature>
<feature type="transmembrane region" description="Helical; Name=3" evidence="3">
    <location>
        <begin position="296"/>
        <end position="316"/>
    </location>
</feature>
<feature type="topological domain" description="Cytoplasmic" evidence="3">
    <location>
        <begin position="317"/>
        <end position="319"/>
    </location>
</feature>
<feature type="transmembrane region" description="Helical; Name=4" evidence="3">
    <location>
        <begin position="320"/>
        <end position="340"/>
    </location>
</feature>
<feature type="topological domain" description="Extracellular" evidence="3">
    <location>
        <begin position="341"/>
        <end position="361"/>
    </location>
</feature>
<feature type="transmembrane region" description="Helical; Name=5" evidence="3">
    <location>
        <begin position="362"/>
        <end position="382"/>
    </location>
</feature>
<feature type="topological domain" description="Cytoplasmic" evidence="3">
    <location>
        <begin position="383"/>
        <end position="405"/>
    </location>
</feature>
<feature type="transmembrane region" description="Helical; Name=6" evidence="3">
    <location>
        <begin position="406"/>
        <end position="426"/>
    </location>
</feature>
<feature type="topological domain" description="Extracellular" evidence="3">
    <location>
        <begin position="427"/>
        <end position="440"/>
    </location>
</feature>
<feature type="transmembrane region" description="Helical; Name=7" evidence="3">
    <location>
        <begin position="441"/>
        <end position="461"/>
    </location>
</feature>
<feature type="topological domain" description="Cytoplasmic" evidence="3">
    <location>
        <begin position="462"/>
        <end position="594"/>
    </location>
</feature>
<feature type="region of interest" description="Disordered" evidence="4">
    <location>
        <begin position="66"/>
        <end position="102"/>
    </location>
</feature>
<feature type="region of interest" description="Disordered" evidence="4">
    <location>
        <begin position="525"/>
        <end position="594"/>
    </location>
</feature>
<feature type="short sequence motif" description="Important for interaction with G proteins" evidence="1">
    <location>
        <begin position="475"/>
        <end position="478"/>
    </location>
</feature>
<feature type="compositionally biased region" description="Low complexity" evidence="4">
    <location>
        <begin position="543"/>
        <end position="558"/>
    </location>
</feature>
<feature type="modified residue" description="Phosphothreonine" evidence="2">
    <location>
        <position position="552"/>
    </location>
</feature>
<feature type="glycosylation site" description="N-linked (GlcNAc...) asparagine" evidence="3">
    <location>
        <position position="152"/>
    </location>
</feature>
<feature type="glycosylation site" description="N-linked (GlcNAc...) asparagine" evidence="3">
    <location>
        <position position="162"/>
    </location>
</feature>
<feature type="glycosylation site" description="N-linked (GlcNAc...) asparagine" evidence="3">
    <location>
        <position position="167"/>
    </location>
</feature>
<feature type="glycosylation site" description="N-linked (GlcNAc...) asparagine" evidence="3">
    <location>
        <position position="177"/>
    </location>
</feature>
<feature type="disulfide bond" evidence="2">
    <location>
        <begin position="48"/>
        <end position="117"/>
    </location>
</feature>
<feature type="disulfide bond" evidence="2">
    <location>
        <begin position="108"/>
        <end position="149"/>
    </location>
</feature>
<feature type="disulfide bond" evidence="2">
    <location>
        <begin position="132"/>
        <end position="171"/>
    </location>
</feature>